<name>YCIB_SALAR</name>
<reference key="1">
    <citation type="submission" date="2007-11" db="EMBL/GenBank/DDBJ databases">
        <authorList>
            <consortium name="The Salmonella enterica serovar Arizonae Genome Sequencing Project"/>
            <person name="McClelland M."/>
            <person name="Sanderson E.K."/>
            <person name="Porwollik S."/>
            <person name="Spieth J."/>
            <person name="Clifton W.S."/>
            <person name="Fulton R."/>
            <person name="Chunyan W."/>
            <person name="Wollam A."/>
            <person name="Shah N."/>
            <person name="Pepin K."/>
            <person name="Bhonagiri V."/>
            <person name="Nash W."/>
            <person name="Johnson M."/>
            <person name="Thiruvilangam P."/>
            <person name="Wilson R."/>
        </authorList>
    </citation>
    <scope>NUCLEOTIDE SEQUENCE [LARGE SCALE GENOMIC DNA]</scope>
    <source>
        <strain>ATCC BAA-731 / CDC346-86 / RSK2980</strain>
    </source>
</reference>
<dbReference type="EMBL" id="CP000880">
    <property type="protein sequence ID" value="ABX21121.1"/>
    <property type="molecule type" value="Genomic_DNA"/>
</dbReference>
<dbReference type="STRING" id="41514.SARI_01219"/>
<dbReference type="KEGG" id="ses:SARI_01219"/>
<dbReference type="HOGENOM" id="CLU_089554_2_0_6"/>
<dbReference type="Proteomes" id="UP000002084">
    <property type="component" value="Chromosome"/>
</dbReference>
<dbReference type="GO" id="GO:0005886">
    <property type="term" value="C:plasma membrane"/>
    <property type="evidence" value="ECO:0007669"/>
    <property type="project" value="UniProtKB-SubCell"/>
</dbReference>
<dbReference type="HAMAP" id="MF_00189">
    <property type="entry name" value="YciB"/>
    <property type="match status" value="1"/>
</dbReference>
<dbReference type="InterPro" id="IPR006008">
    <property type="entry name" value="YciB"/>
</dbReference>
<dbReference type="NCBIfam" id="TIGR00997">
    <property type="entry name" value="ispZ"/>
    <property type="match status" value="1"/>
</dbReference>
<dbReference type="NCBIfam" id="NF001324">
    <property type="entry name" value="PRK00259.1-2"/>
    <property type="match status" value="1"/>
</dbReference>
<dbReference type="NCBIfam" id="NF001325">
    <property type="entry name" value="PRK00259.1-3"/>
    <property type="match status" value="1"/>
</dbReference>
<dbReference type="NCBIfam" id="NF001326">
    <property type="entry name" value="PRK00259.1-4"/>
    <property type="match status" value="1"/>
</dbReference>
<dbReference type="PANTHER" id="PTHR36917:SF1">
    <property type="entry name" value="INNER MEMBRANE-SPANNING PROTEIN YCIB"/>
    <property type="match status" value="1"/>
</dbReference>
<dbReference type="PANTHER" id="PTHR36917">
    <property type="entry name" value="INTRACELLULAR SEPTATION PROTEIN A-RELATED"/>
    <property type="match status" value="1"/>
</dbReference>
<dbReference type="Pfam" id="PF04279">
    <property type="entry name" value="IspA"/>
    <property type="match status" value="1"/>
</dbReference>
<keyword id="KW-0997">Cell inner membrane</keyword>
<keyword id="KW-1003">Cell membrane</keyword>
<keyword id="KW-0472">Membrane</keyword>
<keyword id="KW-1185">Reference proteome</keyword>
<keyword id="KW-0812">Transmembrane</keyword>
<keyword id="KW-1133">Transmembrane helix</keyword>
<gene>
    <name evidence="1" type="primary">yciB</name>
    <name type="ordered locus">SARI_01219</name>
</gene>
<accession>A9MPE0</accession>
<sequence>MKQFLDFLPLVVFFAFYKLYDIYAATSALIVATAIVLIYSWVRYRKIEKMALITFVLVAVFGGLTLFFHNDEFIKWKVTVIYALFAGALLMSQWVMKKPLIQRMLGKELALPQQIWSKLNLAWALFFIVCGLANIYIAFWLPQNIWVNFKVFGLTALTLIFTLLSGVYIYRHLPQEDKS</sequence>
<feature type="chain" id="PRO_1000077492" description="Inner membrane-spanning protein YciB">
    <location>
        <begin position="1"/>
        <end position="179"/>
    </location>
</feature>
<feature type="transmembrane region" description="Helical" evidence="1">
    <location>
        <begin position="22"/>
        <end position="42"/>
    </location>
</feature>
<feature type="transmembrane region" description="Helical" evidence="1">
    <location>
        <begin position="50"/>
        <end position="70"/>
    </location>
</feature>
<feature type="transmembrane region" description="Helical" evidence="1">
    <location>
        <begin position="76"/>
        <end position="96"/>
    </location>
</feature>
<feature type="transmembrane region" description="Helical" evidence="1">
    <location>
        <begin position="121"/>
        <end position="141"/>
    </location>
</feature>
<feature type="transmembrane region" description="Helical" evidence="1">
    <location>
        <begin position="149"/>
        <end position="169"/>
    </location>
</feature>
<comment type="function">
    <text evidence="1">Plays a role in cell envelope biogenesis, maintenance of cell envelope integrity and membrane homeostasis.</text>
</comment>
<comment type="subcellular location">
    <subcellularLocation>
        <location evidence="1">Cell inner membrane</location>
        <topology evidence="1">Multi-pass membrane protein</topology>
    </subcellularLocation>
</comment>
<comment type="similarity">
    <text evidence="1">Belongs to the YciB family.</text>
</comment>
<evidence type="ECO:0000255" key="1">
    <source>
        <dbReference type="HAMAP-Rule" id="MF_00189"/>
    </source>
</evidence>
<protein>
    <recommendedName>
        <fullName evidence="1">Inner membrane-spanning protein YciB</fullName>
    </recommendedName>
</protein>
<organism>
    <name type="scientific">Salmonella arizonae (strain ATCC BAA-731 / CDC346-86 / RSK2980)</name>
    <dbReference type="NCBI Taxonomy" id="41514"/>
    <lineage>
        <taxon>Bacteria</taxon>
        <taxon>Pseudomonadati</taxon>
        <taxon>Pseudomonadota</taxon>
        <taxon>Gammaproteobacteria</taxon>
        <taxon>Enterobacterales</taxon>
        <taxon>Enterobacteriaceae</taxon>
        <taxon>Salmonella</taxon>
    </lineage>
</organism>
<proteinExistence type="inferred from homology"/>